<protein>
    <recommendedName>
        <fullName>Apelin receptor</fullName>
    </recommendedName>
    <alternativeName>
        <fullName>Angiotensin receptor-like 1</fullName>
    </alternativeName>
    <alternativeName>
        <fullName>G-protein coupled receptor APJ</fullName>
    </alternativeName>
    <alternativeName>
        <fullName>MSR</fullName>
    </alternativeName>
</protein>
<gene>
    <name evidence="16" type="primary">Aplnr</name>
    <name type="synonym">Agtrl1</name>
    <name type="synonym">Apj</name>
</gene>
<feature type="chain" id="PRO_0000069175" description="Apelin receptor">
    <location>
        <begin position="1"/>
        <end position="377"/>
    </location>
</feature>
<feature type="topological domain" description="Extracellular" evidence="15">
    <location>
        <begin position="1"/>
        <end position="28"/>
    </location>
</feature>
<feature type="transmembrane region" description="Helical; Name=1" evidence="1">
    <location>
        <begin position="29"/>
        <end position="52"/>
    </location>
</feature>
<feature type="topological domain" description="Cytoplasmic" evidence="15">
    <location>
        <begin position="53"/>
        <end position="62"/>
    </location>
</feature>
<feature type="transmembrane region" description="Helical; Name=2" evidence="1">
    <location>
        <begin position="63"/>
        <end position="84"/>
    </location>
</feature>
<feature type="topological domain" description="Extracellular" evidence="15">
    <location>
        <begin position="85"/>
        <end position="97"/>
    </location>
</feature>
<feature type="transmembrane region" description="Helical; Name=3" evidence="1">
    <location>
        <begin position="98"/>
        <end position="123"/>
    </location>
</feature>
<feature type="topological domain" description="Cytoplasmic" evidence="15">
    <location>
        <begin position="124"/>
        <end position="144"/>
    </location>
</feature>
<feature type="transmembrane region" description="Helical; Name=4" evidence="1">
    <location>
        <begin position="145"/>
        <end position="162"/>
    </location>
</feature>
<feature type="topological domain" description="Extracellular" evidence="15">
    <location>
        <begin position="163"/>
        <end position="196"/>
    </location>
</feature>
<feature type="transmembrane region" description="Helical; Name=5" evidence="1">
    <location>
        <begin position="197"/>
        <end position="221"/>
    </location>
</feature>
<feature type="topological domain" description="Cytoplasmic" evidence="15">
    <location>
        <begin position="222"/>
        <end position="244"/>
    </location>
</feature>
<feature type="transmembrane region" description="Helical; Name=6" evidence="1">
    <location>
        <begin position="245"/>
        <end position="268"/>
    </location>
</feature>
<feature type="topological domain" description="Extracellular" evidence="15">
    <location>
        <begin position="269"/>
        <end position="287"/>
    </location>
</feature>
<feature type="transmembrane region" description="Helical; Name=7" evidence="1">
    <location>
        <begin position="288"/>
        <end position="310"/>
    </location>
</feature>
<feature type="topological domain" description="Cytoplasmic" evidence="15">
    <location>
        <begin position="311"/>
        <end position="377"/>
    </location>
</feature>
<feature type="region of interest" description="Disordered" evidence="7">
    <location>
        <begin position="334"/>
        <end position="377"/>
    </location>
</feature>
<feature type="compositionally biased region" description="Low complexity" evidence="7">
    <location>
        <begin position="335"/>
        <end position="349"/>
    </location>
</feature>
<feature type="site" description="Required for APELA and APLN/apelin-13 interaction and signaling" evidence="1">
    <location>
        <position position="83"/>
    </location>
</feature>
<feature type="site" description="Required for APELA and APLN/apelin-13 interaction and signaling" evidence="1">
    <location>
        <position position="166"/>
    </location>
</feature>
<feature type="glycosylation site" description="N-linked (GlcNAc...) asparagine" evidence="5">
    <location>
        <position position="13"/>
    </location>
</feature>
<feature type="glycosylation site" description="N-linked (GlcNAc...) asparagine" evidence="5">
    <location>
        <position position="173"/>
    </location>
</feature>
<feature type="disulfide bond" evidence="1">
    <location>
        <begin position="17"/>
        <end position="279"/>
    </location>
</feature>
<feature type="disulfide bond" evidence="1">
    <location>
        <begin position="100"/>
        <end position="179"/>
    </location>
</feature>
<evidence type="ECO:0000250" key="1">
    <source>
        <dbReference type="UniProtKB" id="P35414"/>
    </source>
</evidence>
<evidence type="ECO:0000250" key="2">
    <source>
        <dbReference type="UniProtKB" id="P79960"/>
    </source>
</evidence>
<evidence type="ECO:0000250" key="3">
    <source>
        <dbReference type="UniProtKB" id="Q7SZP9"/>
    </source>
</evidence>
<evidence type="ECO:0000250" key="4">
    <source>
        <dbReference type="UniProtKB" id="Q9JHG3"/>
    </source>
</evidence>
<evidence type="ECO:0000255" key="5"/>
<evidence type="ECO:0000255" key="6">
    <source>
        <dbReference type="PROSITE-ProRule" id="PRU00521"/>
    </source>
</evidence>
<evidence type="ECO:0000256" key="7">
    <source>
        <dbReference type="SAM" id="MobiDB-lite"/>
    </source>
</evidence>
<evidence type="ECO:0000269" key="8">
    <source>
    </source>
</evidence>
<evidence type="ECO:0000269" key="9">
    <source>
    </source>
</evidence>
<evidence type="ECO:0000269" key="10">
    <source>
    </source>
</evidence>
<evidence type="ECO:0000269" key="11">
    <source>
    </source>
</evidence>
<evidence type="ECO:0000269" key="12">
    <source>
    </source>
</evidence>
<evidence type="ECO:0000269" key="13">
    <source>
    </source>
</evidence>
<evidence type="ECO:0000269" key="14">
    <source>
    </source>
</evidence>
<evidence type="ECO:0000305" key="15"/>
<evidence type="ECO:0000312" key="16">
    <source>
        <dbReference type="MGI" id="MGI:1346086"/>
    </source>
</evidence>
<keyword id="KW-0037">Angiogenesis</keyword>
<keyword id="KW-1003">Cell membrane</keyword>
<keyword id="KW-0217">Developmental protein</keyword>
<keyword id="KW-1015">Disulfide bond</keyword>
<keyword id="KW-0297">G-protein coupled receptor</keyword>
<keyword id="KW-0306">Gastrulation</keyword>
<keyword id="KW-0325">Glycoprotein</keyword>
<keyword id="KW-0472">Membrane</keyword>
<keyword id="KW-0675">Receptor</keyword>
<keyword id="KW-1185">Reference proteome</keyword>
<keyword id="KW-0807">Transducer</keyword>
<keyword id="KW-0812">Transmembrane</keyword>
<keyword id="KW-1133">Transmembrane helix</keyword>
<accession>Q9WV08</accession>
<accession>Q3TZS9</accession>
<dbReference type="EMBL" id="AJ007612">
    <property type="protein sequence ID" value="CAB50696.1"/>
    <property type="molecule type" value="mRNA"/>
</dbReference>
<dbReference type="EMBL" id="AK075706">
    <property type="protein sequence ID" value="BAC35901.1"/>
    <property type="molecule type" value="mRNA"/>
</dbReference>
<dbReference type="EMBL" id="AK133580">
    <property type="protein sequence ID" value="BAE21731.1"/>
    <property type="molecule type" value="mRNA"/>
</dbReference>
<dbReference type="EMBL" id="AK157582">
    <property type="protein sequence ID" value="BAE34128.1"/>
    <property type="molecule type" value="mRNA"/>
</dbReference>
<dbReference type="EMBL" id="BC039224">
    <property type="protein sequence ID" value="AAH39224.1"/>
    <property type="molecule type" value="mRNA"/>
</dbReference>
<dbReference type="CCDS" id="CCDS16201.1"/>
<dbReference type="RefSeq" id="NP_035914.1">
    <property type="nucleotide sequence ID" value="NM_011784.3"/>
</dbReference>
<dbReference type="SMR" id="Q9WV08"/>
<dbReference type="CORUM" id="Q9WV08"/>
<dbReference type="FunCoup" id="Q9WV08">
    <property type="interactions" value="1467"/>
</dbReference>
<dbReference type="STRING" id="10090.ENSMUSP00000053638"/>
<dbReference type="BindingDB" id="Q9WV08"/>
<dbReference type="ChEMBL" id="CHEMBL4879524"/>
<dbReference type="GlyCosmos" id="Q9WV08">
    <property type="glycosylation" value="2 sites, No reported glycans"/>
</dbReference>
<dbReference type="GlyGen" id="Q9WV08">
    <property type="glycosylation" value="2 sites"/>
</dbReference>
<dbReference type="iPTMnet" id="Q9WV08"/>
<dbReference type="PhosphoSitePlus" id="Q9WV08"/>
<dbReference type="SwissPalm" id="Q9WV08"/>
<dbReference type="PaxDb" id="10090-ENSMUSP00000053638"/>
<dbReference type="ProteomicsDB" id="296374"/>
<dbReference type="Antibodypedia" id="14066">
    <property type="antibodies" value="562 antibodies from 36 providers"/>
</dbReference>
<dbReference type="DNASU" id="23796"/>
<dbReference type="Ensembl" id="ENSMUST00000057019.9">
    <property type="protein sequence ID" value="ENSMUSP00000053638.8"/>
    <property type="gene ID" value="ENSMUSG00000044338.10"/>
</dbReference>
<dbReference type="GeneID" id="23796"/>
<dbReference type="KEGG" id="mmu:23796"/>
<dbReference type="UCSC" id="uc008kkb.2">
    <property type="organism name" value="mouse"/>
</dbReference>
<dbReference type="AGR" id="MGI:1346086"/>
<dbReference type="CTD" id="187"/>
<dbReference type="MGI" id="MGI:1346086">
    <property type="gene designation" value="Aplnr"/>
</dbReference>
<dbReference type="VEuPathDB" id="HostDB:ENSMUSG00000044338"/>
<dbReference type="eggNOG" id="KOG3656">
    <property type="taxonomic scope" value="Eukaryota"/>
</dbReference>
<dbReference type="GeneTree" id="ENSGT01130000278303"/>
<dbReference type="HOGENOM" id="CLU_009579_8_1_1"/>
<dbReference type="InParanoid" id="Q9WV08"/>
<dbReference type="OMA" id="YAWLGYH"/>
<dbReference type="OrthoDB" id="5974286at2759"/>
<dbReference type="PhylomeDB" id="Q9WV08"/>
<dbReference type="TreeFam" id="TF330024"/>
<dbReference type="Reactome" id="R-MMU-375276">
    <property type="pathway name" value="Peptide ligand-binding receptors"/>
</dbReference>
<dbReference type="Reactome" id="R-MMU-418594">
    <property type="pathway name" value="G alpha (i) signalling events"/>
</dbReference>
<dbReference type="BioGRID-ORCS" id="23796">
    <property type="hits" value="2 hits in 78 CRISPR screens"/>
</dbReference>
<dbReference type="PRO" id="PR:Q9WV08"/>
<dbReference type="Proteomes" id="UP000000589">
    <property type="component" value="Chromosome 2"/>
</dbReference>
<dbReference type="RNAct" id="Q9WV08">
    <property type="molecule type" value="protein"/>
</dbReference>
<dbReference type="Bgee" id="ENSMUSG00000044338">
    <property type="expression patterns" value="Expressed in renal medulla interstitium and 213 other cell types or tissues"/>
</dbReference>
<dbReference type="ExpressionAtlas" id="Q9WV08">
    <property type="expression patterns" value="baseline and differential"/>
</dbReference>
<dbReference type="GO" id="GO:0005886">
    <property type="term" value="C:plasma membrane"/>
    <property type="evidence" value="ECO:0000250"/>
    <property type="project" value="UniProtKB"/>
</dbReference>
<dbReference type="GO" id="GO:0060182">
    <property type="term" value="F:apelin receptor activity"/>
    <property type="evidence" value="ECO:0000314"/>
    <property type="project" value="UniProtKB"/>
</dbReference>
<dbReference type="GO" id="GO:0140897">
    <property type="term" value="F:mechanoreceptor activity"/>
    <property type="evidence" value="ECO:0000315"/>
    <property type="project" value="UniProtKB"/>
</dbReference>
<dbReference type="GO" id="GO:0007193">
    <property type="term" value="P:adenylate cyclase-inhibiting G protein-coupled receptor signaling pathway"/>
    <property type="evidence" value="ECO:0007669"/>
    <property type="project" value="Ensembl"/>
</dbReference>
<dbReference type="GO" id="GO:0007512">
    <property type="term" value="P:adult heart development"/>
    <property type="evidence" value="ECO:0000315"/>
    <property type="project" value="UniProtKB"/>
</dbReference>
<dbReference type="GO" id="GO:0001525">
    <property type="term" value="P:angiogenesis"/>
    <property type="evidence" value="ECO:0007669"/>
    <property type="project" value="UniProtKB-KW"/>
</dbReference>
<dbReference type="GO" id="GO:0035904">
    <property type="term" value="P:aorta development"/>
    <property type="evidence" value="ECO:0000315"/>
    <property type="project" value="BHF-UCL"/>
</dbReference>
<dbReference type="GO" id="GO:0060183">
    <property type="term" value="P:apelin receptor signaling pathway"/>
    <property type="evidence" value="ECO:0000314"/>
    <property type="project" value="UniProtKB"/>
</dbReference>
<dbReference type="GO" id="GO:0003171">
    <property type="term" value="P:atrioventricular valve development"/>
    <property type="evidence" value="ECO:0000315"/>
    <property type="project" value="BHF-UCL"/>
</dbReference>
<dbReference type="GO" id="GO:0060976">
    <property type="term" value="P:coronary vasculature development"/>
    <property type="evidence" value="ECO:0000315"/>
    <property type="project" value="UniProtKB"/>
</dbReference>
<dbReference type="GO" id="GO:0003272">
    <property type="term" value="P:endocardial cushion formation"/>
    <property type="evidence" value="ECO:0000315"/>
    <property type="project" value="BHF-UCL"/>
</dbReference>
<dbReference type="GO" id="GO:0007186">
    <property type="term" value="P:G protein-coupled receptor signaling pathway"/>
    <property type="evidence" value="ECO:0000250"/>
    <property type="project" value="UniProtKB"/>
</dbReference>
<dbReference type="GO" id="GO:0007369">
    <property type="term" value="P:gastrulation"/>
    <property type="evidence" value="ECO:0007669"/>
    <property type="project" value="UniProtKB-KW"/>
</dbReference>
<dbReference type="GO" id="GO:0007507">
    <property type="term" value="P:heart development"/>
    <property type="evidence" value="ECO:0000250"/>
    <property type="project" value="UniProtKB"/>
</dbReference>
<dbReference type="GO" id="GO:0001947">
    <property type="term" value="P:heart looping"/>
    <property type="evidence" value="ECO:0000315"/>
    <property type="project" value="BHF-UCL"/>
</dbReference>
<dbReference type="GO" id="GO:0043951">
    <property type="term" value="P:negative regulation of cAMP-mediated signaling"/>
    <property type="evidence" value="ECO:0000250"/>
    <property type="project" value="UniProtKB"/>
</dbReference>
<dbReference type="GO" id="GO:0010629">
    <property type="term" value="P:negative regulation of gene expression"/>
    <property type="evidence" value="ECO:0000315"/>
    <property type="project" value="BHF-UCL"/>
</dbReference>
<dbReference type="GO" id="GO:0045766">
    <property type="term" value="P:positive regulation of angiogenesis"/>
    <property type="evidence" value="ECO:0000250"/>
    <property type="project" value="UniProtKB"/>
</dbReference>
<dbReference type="GO" id="GO:1903589">
    <property type="term" value="P:positive regulation of blood vessel endothelial cell proliferation involved in sprouting angiogenesis"/>
    <property type="evidence" value="ECO:0000315"/>
    <property type="project" value="UniProtKB"/>
</dbReference>
<dbReference type="GO" id="GO:1904022">
    <property type="term" value="P:positive regulation of G protein-coupled receptor internalization"/>
    <property type="evidence" value="ECO:0007669"/>
    <property type="project" value="Ensembl"/>
</dbReference>
<dbReference type="GO" id="GO:0051281">
    <property type="term" value="P:positive regulation of release of sequestered calcium ion into cytosol"/>
    <property type="evidence" value="ECO:0000250"/>
    <property type="project" value="UniProtKB"/>
</dbReference>
<dbReference type="GO" id="GO:0050878">
    <property type="term" value="P:regulation of body fluid levels"/>
    <property type="evidence" value="ECO:0007669"/>
    <property type="project" value="Ensembl"/>
</dbReference>
<dbReference type="GO" id="GO:1903596">
    <property type="term" value="P:regulation of gap junction assembly"/>
    <property type="evidence" value="ECO:0000315"/>
    <property type="project" value="BHF-UCL"/>
</dbReference>
<dbReference type="GO" id="GO:0010468">
    <property type="term" value="P:regulation of gene expression"/>
    <property type="evidence" value="ECO:0000315"/>
    <property type="project" value="BHF-UCL"/>
</dbReference>
<dbReference type="GO" id="GO:0035886">
    <property type="term" value="P:vascular associated smooth muscle cell differentiation"/>
    <property type="evidence" value="ECO:0000315"/>
    <property type="project" value="BHF-UCL"/>
</dbReference>
<dbReference type="GO" id="GO:0001944">
    <property type="term" value="P:vasculature development"/>
    <property type="evidence" value="ECO:0000315"/>
    <property type="project" value="BHF-UCL"/>
</dbReference>
<dbReference type="GO" id="GO:0001570">
    <property type="term" value="P:vasculogenesis"/>
    <property type="evidence" value="ECO:0000315"/>
    <property type="project" value="UniProtKB"/>
</dbReference>
<dbReference type="GO" id="GO:0060841">
    <property type="term" value="P:venous blood vessel development"/>
    <property type="evidence" value="ECO:0000315"/>
    <property type="project" value="BHF-UCL"/>
</dbReference>
<dbReference type="GO" id="GO:0060412">
    <property type="term" value="P:ventricular septum morphogenesis"/>
    <property type="evidence" value="ECO:0000315"/>
    <property type="project" value="BHF-UCL"/>
</dbReference>
<dbReference type="CDD" id="cd15190">
    <property type="entry name" value="7tmA_Apelin_R"/>
    <property type="match status" value="1"/>
</dbReference>
<dbReference type="FunFam" id="1.20.1070.10:FF:000106">
    <property type="entry name" value="Apelin receptor a"/>
    <property type="match status" value="1"/>
</dbReference>
<dbReference type="Gene3D" id="1.20.1070.10">
    <property type="entry name" value="Rhodopsin 7-helix transmembrane proteins"/>
    <property type="match status" value="1"/>
</dbReference>
<dbReference type="InterPro" id="IPR003904">
    <property type="entry name" value="Apelin_rcpt"/>
</dbReference>
<dbReference type="InterPro" id="IPR050119">
    <property type="entry name" value="CCR1-9-like"/>
</dbReference>
<dbReference type="InterPro" id="IPR000276">
    <property type="entry name" value="GPCR_Rhodpsn"/>
</dbReference>
<dbReference type="InterPro" id="IPR017452">
    <property type="entry name" value="GPCR_Rhodpsn_7TM"/>
</dbReference>
<dbReference type="PANTHER" id="PTHR10489:SF953">
    <property type="entry name" value="APELIN RECEPTOR"/>
    <property type="match status" value="1"/>
</dbReference>
<dbReference type="PANTHER" id="PTHR10489">
    <property type="entry name" value="CELL ADHESION MOLECULE"/>
    <property type="match status" value="1"/>
</dbReference>
<dbReference type="Pfam" id="PF00001">
    <property type="entry name" value="7tm_1"/>
    <property type="match status" value="1"/>
</dbReference>
<dbReference type="PRINTS" id="PR01416">
    <property type="entry name" value="APJRECEPTOR"/>
</dbReference>
<dbReference type="PRINTS" id="PR00237">
    <property type="entry name" value="GPCRRHODOPSN"/>
</dbReference>
<dbReference type="SUPFAM" id="SSF81321">
    <property type="entry name" value="Family A G protein-coupled receptor-like"/>
    <property type="match status" value="1"/>
</dbReference>
<dbReference type="PROSITE" id="PS00237">
    <property type="entry name" value="G_PROTEIN_RECEP_F1_1"/>
    <property type="match status" value="1"/>
</dbReference>
<dbReference type="PROSITE" id="PS50262">
    <property type="entry name" value="G_PROTEIN_RECEP_F1_2"/>
    <property type="match status" value="1"/>
</dbReference>
<sequence>MEDDGYNYYGADNQSECDYADWKPSGALIPAIYMLVFLLGTTGNGLVLWTVFRTSREKRRSADIFIASLAVADLTFVVTLPLWATYTYREFDWPFGTFSCKLSSYLIFVNMYASVFCLTGLSFDRYLAIVRPVANARLRLRVSGAVATAVLWVLAALLAVPVMVFRSTDASENGTKIQCYMDYSMVATSNSEWAWEVGLGVSSTAVGFVVPFTIMLTCYFFIAQTIAGHFRKERIEGLRKRRRLLSIIVVLVVTFALCWMPYHLVKTLYMLGSLLHWPCDFDIFLMNVFPYCTCISYVNSCLNPFLYAFFDPRFRQACTSMLCCDQSGCKGTPHSSSAEKSASYSSGHSQGPGPNMGKGGEQMHEKSIPYSQETLVD</sequence>
<name>APJ_MOUSE</name>
<proteinExistence type="evidence at protein level"/>
<organism>
    <name type="scientific">Mus musculus</name>
    <name type="common">Mouse</name>
    <dbReference type="NCBI Taxonomy" id="10090"/>
    <lineage>
        <taxon>Eukaryota</taxon>
        <taxon>Metazoa</taxon>
        <taxon>Chordata</taxon>
        <taxon>Craniata</taxon>
        <taxon>Vertebrata</taxon>
        <taxon>Euteleostomi</taxon>
        <taxon>Mammalia</taxon>
        <taxon>Eutheria</taxon>
        <taxon>Euarchontoglires</taxon>
        <taxon>Glires</taxon>
        <taxon>Rodentia</taxon>
        <taxon>Myomorpha</taxon>
        <taxon>Muroidea</taxon>
        <taxon>Muridae</taxon>
        <taxon>Murinae</taxon>
        <taxon>Mus</taxon>
        <taxon>Mus</taxon>
    </lineage>
</organism>
<comment type="function">
    <text evidence="3 9 11 12 13 14">G protein-coupled receptor for peptide hormones apelin (APLN) and apelin receptor early endogenous ligand (APELA), that plays a role in the regulation of normal cardiovascular function and fluid homeostasis (PubMed:22810587, PubMed:28663440, PubMed:28854362, PubMed:28890073). When acting as apelin receptor, activates both G(i) protein pathway that inhibits adenylate cyclase activity, and the beta-arrestin pathway leading to internalization of the receptor (PubMed:22810587, PubMed:28663440, PubMed:28854362, PubMed:28890073). APLNR/APJ receptor is also activated by mechanical strech in a G-protein-independent fashion to induce beta-arrestin signaling leading to cardiac hypertrophy (PubMed:22810587). However, the presence of apelin ligand blunts cardiac hypertrophic induction from APLNR/APJ on response to pathological stimuli (PubMed:22810587). Plays a key role in early development such as gastrulation, blood vessels formation and heart morphogenesis by acting as a receptor for APELA hormone (PubMed:28663440, PubMed:28854362, PubMed:28890073). May promote angioblast migration toward the embryonic midline, i.e. the position of the future vessel formation, during vasculogenesis (By similarity). Promotes sinus venosus (SV)-derived endothelial cells migration into the developing heart to promote coronary blood vessel development (PubMed:28890073). Also plays a role in various processes in adults such as regulation of blood vessel formation, blood pressure and heart contractility and protection from cardiac hypertrophy and heart failure (PubMed:22810587, PubMed:28371822).</text>
</comment>
<comment type="subunit">
    <text evidence="1">Homodimer; dimerization inhibits APLNR-mediated G protein and beta-arrestin signaling pathways compared to monomeric APLNR.</text>
</comment>
<comment type="subcellular location">
    <subcellularLocation>
        <location evidence="1">Cell membrane</location>
        <topology evidence="2">Multi-pass membrane protein</topology>
    </subcellularLocation>
    <text evidence="1 4">After exposure to apelin (APLN) or apelin receptor early endogenous ligand (APELA), internalized from the cell surface into an endosomal recycling compartment, from where it is recycled to the cell membrane.</text>
</comment>
<comment type="tissue specificity">
    <text evidence="8 10 12 13 14">Expressed in coronary endothelial cells (at protein level) (PubMed:28890073). Expressed in the embryo, allantoic and endothelial precursor cells of the yolk sac at 8 days post-coitum (dpc) (PubMed:28663440). Expressed in the secondary heart field and somite at 8.25 dpc (PubMed:28854362). Expressed in fetal allantoic endothelial cells at 9 dpc (PubMed:28663440). Expressed in the allantoid and the invading fetal vasculature of the placenta at 9.5 dpc (PubMed:28854362). Expressed in endothelial cells adjacent to syncytiotrophoblast cells at 10.5 dpc (PubMed:28663440). Expressed weakly in the embryonic heart at 11.5 dpc (PubMed:26611206). Expressed in the adult heart (PubMed:26611206). Expressed in endothelial cells and cardiomyocytes and weakly expressed in fibroblasts (PubMed:10473142, PubMed:26611206).</text>
</comment>
<comment type="developmental stage">
    <text evidence="8">Expressed from embryonic 8 days post-coitum (dpc) throughout the subsequent stages of formation of the cardiovascular system (PubMed:10473142).</text>
</comment>
<comment type="induction">
    <text evidence="10">Up-regulated following myocardial infarction (MI) (at protein level) (PubMed:26611206).</text>
</comment>
<comment type="domain">
    <text evidence="1">The hydrogen bond between Asn-44 and Asp-73 is crucial for beta-arrestin signaling induced by APLN/apelin-13.</text>
</comment>
<comment type="disruption phenotype">
    <text evidence="9 11 12 13 14">Mice lacking APLNR are not represented at Mendelian ratios. Mutant embryos exhibit incomplete penetrance of embryonic lethality (PubMed:28663440, PubMed:28854362). Mutant embryos display improper establishment of the fetal-maternal circulation, such as underdeveloped yolk sac vasculature, embryonic vascular malformations and impaired cardiac tube looping at 10.5 dpc (PubMed:28663440, PubMed:28854362). Mice heart of embryos show reduced coronary vessel growth at 13.5 dpc (PubMed:28890073). The heart of mutant adult mice induced by pressure overload display no improvement in cardiac dysfunction, hypertrophy and fibrosis in response to peptide hormone APELA treatment (PubMed:28371822). Conditional knockout in heart endothelial cells leads to delayed progression of vessel growth onto the heart and reduced branching of the developing coronary plexus in both the subepicardial and intramyocardial layers at 13.5 and 15.5 dpc (PubMed:28890073). Conditional endothelial-specific knockout adult mice, despite severe embryonic coronary vessel defects recover normal cardiac functions; endocardial-derived coronary vessels expand to rescue defective sinus venosus development in a APELA-APLNR-independent manner (PubMed:28890073). Double knockout mice of APLNR and APELA genes exhibited the same penetrance and embryonic lethality as single APELA knockout mice (PubMed:28854362). Viable knockout mice display normal adult appearance and cardiovascular parameters at baseline. However, they show resistance to chronic pressure overload by dramatically reducing myocardial hypertrophy and heart failure (PubMed:22810587).</text>
</comment>
<comment type="similarity">
    <text evidence="6">Belongs to the G-protein coupled receptor 1 family.</text>
</comment>
<reference key="1">
    <citation type="journal article" date="1999" name="Mech. Dev.">
        <title>Amino acid sequence and embryonic expression of msr/apj, the mouse homolog of Xenopus X-msr and human APJ.</title>
        <authorList>
            <person name="Devic E."/>
            <person name="Rizzoti K."/>
            <person name="Bodin S."/>
            <person name="Knibiehler B."/>
            <person name="Audigier Y."/>
        </authorList>
    </citation>
    <scope>NUCLEOTIDE SEQUENCE [MRNA]</scope>
    <scope>DEVELOPMENTAL STAGE</scope>
</reference>
<reference key="2">
    <citation type="journal article" date="2005" name="Science">
        <title>The transcriptional landscape of the mammalian genome.</title>
        <authorList>
            <person name="Carninci P."/>
            <person name="Kasukawa T."/>
            <person name="Katayama S."/>
            <person name="Gough J."/>
            <person name="Frith M.C."/>
            <person name="Maeda N."/>
            <person name="Oyama R."/>
            <person name="Ravasi T."/>
            <person name="Lenhard B."/>
            <person name="Wells C."/>
            <person name="Kodzius R."/>
            <person name="Shimokawa K."/>
            <person name="Bajic V.B."/>
            <person name="Brenner S.E."/>
            <person name="Batalov S."/>
            <person name="Forrest A.R."/>
            <person name="Zavolan M."/>
            <person name="Davis M.J."/>
            <person name="Wilming L.G."/>
            <person name="Aidinis V."/>
            <person name="Allen J.E."/>
            <person name="Ambesi-Impiombato A."/>
            <person name="Apweiler R."/>
            <person name="Aturaliya R.N."/>
            <person name="Bailey T.L."/>
            <person name="Bansal M."/>
            <person name="Baxter L."/>
            <person name="Beisel K.W."/>
            <person name="Bersano T."/>
            <person name="Bono H."/>
            <person name="Chalk A.M."/>
            <person name="Chiu K.P."/>
            <person name="Choudhary V."/>
            <person name="Christoffels A."/>
            <person name="Clutterbuck D.R."/>
            <person name="Crowe M.L."/>
            <person name="Dalla E."/>
            <person name="Dalrymple B.P."/>
            <person name="de Bono B."/>
            <person name="Della Gatta G."/>
            <person name="di Bernardo D."/>
            <person name="Down T."/>
            <person name="Engstrom P."/>
            <person name="Fagiolini M."/>
            <person name="Faulkner G."/>
            <person name="Fletcher C.F."/>
            <person name="Fukushima T."/>
            <person name="Furuno M."/>
            <person name="Futaki S."/>
            <person name="Gariboldi M."/>
            <person name="Georgii-Hemming P."/>
            <person name="Gingeras T.R."/>
            <person name="Gojobori T."/>
            <person name="Green R.E."/>
            <person name="Gustincich S."/>
            <person name="Harbers M."/>
            <person name="Hayashi Y."/>
            <person name="Hensch T.K."/>
            <person name="Hirokawa N."/>
            <person name="Hill D."/>
            <person name="Huminiecki L."/>
            <person name="Iacono M."/>
            <person name="Ikeo K."/>
            <person name="Iwama A."/>
            <person name="Ishikawa T."/>
            <person name="Jakt M."/>
            <person name="Kanapin A."/>
            <person name="Katoh M."/>
            <person name="Kawasawa Y."/>
            <person name="Kelso J."/>
            <person name="Kitamura H."/>
            <person name="Kitano H."/>
            <person name="Kollias G."/>
            <person name="Krishnan S.P."/>
            <person name="Kruger A."/>
            <person name="Kummerfeld S.K."/>
            <person name="Kurochkin I.V."/>
            <person name="Lareau L.F."/>
            <person name="Lazarevic D."/>
            <person name="Lipovich L."/>
            <person name="Liu J."/>
            <person name="Liuni S."/>
            <person name="McWilliam S."/>
            <person name="Madan Babu M."/>
            <person name="Madera M."/>
            <person name="Marchionni L."/>
            <person name="Matsuda H."/>
            <person name="Matsuzawa S."/>
            <person name="Miki H."/>
            <person name="Mignone F."/>
            <person name="Miyake S."/>
            <person name="Morris K."/>
            <person name="Mottagui-Tabar S."/>
            <person name="Mulder N."/>
            <person name="Nakano N."/>
            <person name="Nakauchi H."/>
            <person name="Ng P."/>
            <person name="Nilsson R."/>
            <person name="Nishiguchi S."/>
            <person name="Nishikawa S."/>
            <person name="Nori F."/>
            <person name="Ohara O."/>
            <person name="Okazaki Y."/>
            <person name="Orlando V."/>
            <person name="Pang K.C."/>
            <person name="Pavan W.J."/>
            <person name="Pavesi G."/>
            <person name="Pesole G."/>
            <person name="Petrovsky N."/>
            <person name="Piazza S."/>
            <person name="Reed J."/>
            <person name="Reid J.F."/>
            <person name="Ring B.Z."/>
            <person name="Ringwald M."/>
            <person name="Rost B."/>
            <person name="Ruan Y."/>
            <person name="Salzberg S.L."/>
            <person name="Sandelin A."/>
            <person name="Schneider C."/>
            <person name="Schoenbach C."/>
            <person name="Sekiguchi K."/>
            <person name="Semple C.A."/>
            <person name="Seno S."/>
            <person name="Sessa L."/>
            <person name="Sheng Y."/>
            <person name="Shibata Y."/>
            <person name="Shimada H."/>
            <person name="Shimada K."/>
            <person name="Silva D."/>
            <person name="Sinclair B."/>
            <person name="Sperling S."/>
            <person name="Stupka E."/>
            <person name="Sugiura K."/>
            <person name="Sultana R."/>
            <person name="Takenaka Y."/>
            <person name="Taki K."/>
            <person name="Tammoja K."/>
            <person name="Tan S.L."/>
            <person name="Tang S."/>
            <person name="Taylor M.S."/>
            <person name="Tegner J."/>
            <person name="Teichmann S.A."/>
            <person name="Ueda H.R."/>
            <person name="van Nimwegen E."/>
            <person name="Verardo R."/>
            <person name="Wei C.L."/>
            <person name="Yagi K."/>
            <person name="Yamanishi H."/>
            <person name="Zabarovsky E."/>
            <person name="Zhu S."/>
            <person name="Zimmer A."/>
            <person name="Hide W."/>
            <person name="Bult C."/>
            <person name="Grimmond S.M."/>
            <person name="Teasdale R.D."/>
            <person name="Liu E.T."/>
            <person name="Brusic V."/>
            <person name="Quackenbush J."/>
            <person name="Wahlestedt C."/>
            <person name="Mattick J.S."/>
            <person name="Hume D.A."/>
            <person name="Kai C."/>
            <person name="Sasaki D."/>
            <person name="Tomaru Y."/>
            <person name="Fukuda S."/>
            <person name="Kanamori-Katayama M."/>
            <person name="Suzuki M."/>
            <person name="Aoki J."/>
            <person name="Arakawa T."/>
            <person name="Iida J."/>
            <person name="Imamura K."/>
            <person name="Itoh M."/>
            <person name="Kato T."/>
            <person name="Kawaji H."/>
            <person name="Kawagashira N."/>
            <person name="Kawashima T."/>
            <person name="Kojima M."/>
            <person name="Kondo S."/>
            <person name="Konno H."/>
            <person name="Nakano K."/>
            <person name="Ninomiya N."/>
            <person name="Nishio T."/>
            <person name="Okada M."/>
            <person name="Plessy C."/>
            <person name="Shibata K."/>
            <person name="Shiraki T."/>
            <person name="Suzuki S."/>
            <person name="Tagami M."/>
            <person name="Waki K."/>
            <person name="Watahiki A."/>
            <person name="Okamura-Oho Y."/>
            <person name="Suzuki H."/>
            <person name="Kawai J."/>
            <person name="Hayashizaki Y."/>
        </authorList>
    </citation>
    <scope>NUCLEOTIDE SEQUENCE [LARGE SCALE MRNA]</scope>
    <source>
        <strain>C57BL/6J</strain>
        <strain>NOD</strain>
        <tissue>Lung</tissue>
        <tissue>Pituitary</tissue>
        <tissue>Spleen</tissue>
    </source>
</reference>
<reference key="3">
    <citation type="journal article" date="2004" name="Genome Res.">
        <title>The status, quality, and expansion of the NIH full-length cDNA project: the Mammalian Gene Collection (MGC).</title>
        <authorList>
            <consortium name="The MGC Project Team"/>
        </authorList>
    </citation>
    <scope>NUCLEOTIDE SEQUENCE [LARGE SCALE MRNA]</scope>
    <source>
        <strain>FVB/N</strain>
        <tissue>Mammary gland</tissue>
    </source>
</reference>
<reference key="4">
    <citation type="journal article" date="2012" name="Nature">
        <title>APJ acts as a dual receptor in cardiac hypertrophy.</title>
        <authorList>
            <person name="Scimia M.C."/>
            <person name="Hurtado C."/>
            <person name="Ray S."/>
            <person name="Metzler S."/>
            <person name="Wei K."/>
            <person name="Wang J."/>
            <person name="Woods C.E."/>
            <person name="Purcell N.H."/>
            <person name="Catalucci D."/>
            <person name="Akasaka T."/>
            <person name="Bueno O.F."/>
            <person name="Vlasuk G.P."/>
            <person name="Kaliman P."/>
            <person name="Bodmer R."/>
            <person name="Smith L.H."/>
            <person name="Ashley E."/>
            <person name="Mercola M."/>
            <person name="Brown J.H."/>
            <person name="Ruiz-Lozano P."/>
        </authorList>
    </citation>
    <scope>FUNCTION</scope>
    <scope>DISRUPTION PHENOTYPE</scope>
</reference>
<reference key="5">
    <citation type="journal article" date="2017" name="Cell Rep.">
        <title>Loss of Apela peptide in mice causes low penetrance embryonic lethality and defects in early mesodermal derivatives.</title>
        <authorList>
            <person name="Freyer L."/>
            <person name="Hsu C.W."/>
            <person name="Nowotschin S."/>
            <person name="Pauli A."/>
            <person name="Ishida J."/>
            <person name="Kuba K."/>
            <person name="Fukamizu A."/>
            <person name="Schier A.F."/>
            <person name="Hoodless P.A."/>
            <person name="Dickinson M.E."/>
            <person name="Hadjantonakis A.K."/>
        </authorList>
    </citation>
    <scope>FUNCTION</scope>
    <scope>DISRUPTION PHENOTYPE</scope>
    <scope>TISSUE SPECIFICITY</scope>
</reference>
<reference key="6">
    <citation type="journal article" date="2016" name="Basic Res. Cardiol.">
        <title>Characterization of apela, a novel endogenous ligand of apelin receptor, in the adult heart.</title>
        <authorList>
            <person name="Perjes A."/>
            <person name="Kilpioe T."/>
            <person name="Ulvila J."/>
            <person name="Magga J."/>
            <person name="Alakoski T."/>
            <person name="Szabo Z."/>
            <person name="Vainio L."/>
            <person name="Halmetoja E."/>
            <person name="Vuolteenaho O."/>
            <person name="Petaejae-Repo U."/>
            <person name="Szokodi I."/>
            <person name="Kerkelae R."/>
        </authorList>
    </citation>
    <scope>TISSUE SPECIFICITY</scope>
    <scope>INDUCTION</scope>
</reference>
<reference key="7">
    <citation type="journal article" date="2017" name="Cardiovasc. Res.">
        <title>ELABELA-APJ axis protects from pressure overload heart failure and angiotensin II-induced cardiac damage.</title>
        <authorList>
            <person name="Sato T."/>
            <person name="Sato C."/>
            <person name="Kadowaki A."/>
            <person name="Watanabe H."/>
            <person name="Ho L."/>
            <person name="Ishida J."/>
            <person name="Yamaguchi T."/>
            <person name="Kimura A."/>
            <person name="Fukamizu A."/>
            <person name="Penninger J.M."/>
            <person name="Reversade B."/>
            <person name="Ito H."/>
            <person name="Imai Y."/>
            <person name="Kuba K."/>
        </authorList>
    </citation>
    <scope>FUNCTION</scope>
    <scope>DISRUPTION PHENOTYPE</scope>
</reference>
<reference key="8">
    <citation type="journal article" date="2017" name="Dev. Cell">
        <title>Alternative progenitor cells compensate to rebuild the coronary vasculature in Elabela- and Apj-deficient hearts.</title>
        <authorList>
            <person name="Sharma B."/>
            <person name="Ho L."/>
            <person name="Ford G.H."/>
            <person name="Chen H.I."/>
            <person name="Goldstone A.B."/>
            <person name="Woo Y.J."/>
            <person name="Quertermous T."/>
            <person name="Reversade B."/>
            <person name="Red-Horse K."/>
        </authorList>
    </citation>
    <scope>FUNCTION</scope>
    <scope>DISRUPTION PHENOTYPE</scope>
    <scope>TISSUE SPECIFICITY</scope>
</reference>
<reference key="9">
    <citation type="journal article" date="2017" name="Science">
        <title>ELABELA deficiency promotes preeclampsia and cardiovascular malformations in mice.</title>
        <authorList>
            <person name="Ho L."/>
            <person name="van Dijk M."/>
            <person name="Chye S.T.J."/>
            <person name="Messerschmidt D.M."/>
            <person name="Chng S.C."/>
            <person name="Ong S."/>
            <person name="Yi L.K."/>
            <person name="Boussata S."/>
            <person name="Goh G.H."/>
            <person name="Afink G.B."/>
            <person name="Lim C.Y."/>
            <person name="Dunn N.R."/>
            <person name="Solter D."/>
            <person name="Knowles B.B."/>
            <person name="Reversade B."/>
        </authorList>
    </citation>
    <scope>FUNCTION</scope>
    <scope>DISRUPTION PHENOTYPE</scope>
    <scope>TISSUE SPECIFICITY</scope>
</reference>